<feature type="chain" id="PRO_0000060511" description="tRNA (guanine(9)-N1)-methyltransferase">
    <location>
        <begin position="1"/>
        <end position="323"/>
    </location>
</feature>
<feature type="domain" description="SAM-dependent MTase TRM10-type" evidence="3">
    <location>
        <begin position="99"/>
        <end position="319"/>
    </location>
</feature>
<feature type="region of interest" description="Disordered" evidence="4">
    <location>
        <begin position="1"/>
        <end position="34"/>
    </location>
</feature>
<feature type="region of interest" description="Disordered" evidence="4">
    <location>
        <begin position="192"/>
        <end position="215"/>
    </location>
</feature>
<feature type="compositionally biased region" description="Polar residues" evidence="4">
    <location>
        <begin position="1"/>
        <end position="16"/>
    </location>
</feature>
<feature type="compositionally biased region" description="Basic and acidic residues" evidence="4">
    <location>
        <begin position="25"/>
        <end position="34"/>
    </location>
</feature>
<feature type="compositionally biased region" description="Low complexity" evidence="4">
    <location>
        <begin position="204"/>
        <end position="215"/>
    </location>
</feature>
<feature type="active site" description="Proton acceptor" evidence="1">
    <location>
        <position position="249"/>
    </location>
</feature>
<feature type="binding site" evidence="2">
    <location>
        <begin position="225"/>
        <end position="226"/>
    </location>
    <ligand>
        <name>S-adenosyl-L-methionine</name>
        <dbReference type="ChEBI" id="CHEBI:59789"/>
    </ligand>
</feature>
<feature type="binding site" evidence="2">
    <location>
        <position position="245"/>
    </location>
    <ligand>
        <name>S-adenosyl-L-methionine</name>
        <dbReference type="ChEBI" id="CHEBI:59789"/>
    </ligand>
</feature>
<feature type="binding site" evidence="2">
    <location>
        <begin position="249"/>
        <end position="253"/>
    </location>
    <ligand>
        <name>S-adenosyl-L-methionine</name>
        <dbReference type="ChEBI" id="CHEBI:59789"/>
    </ligand>
</feature>
<feature type="binding site" evidence="2">
    <location>
        <position position="257"/>
    </location>
    <ligand>
        <name>S-adenosyl-L-methionine</name>
        <dbReference type="ChEBI" id="CHEBI:59789"/>
    </ligand>
</feature>
<feature type="binding site" evidence="2">
    <location>
        <position position="271"/>
    </location>
    <ligand>
        <name>S-adenosyl-L-methionine</name>
        <dbReference type="ChEBI" id="CHEBI:59789"/>
    </ligand>
</feature>
<feature type="binding site" evidence="2">
    <location>
        <begin position="283"/>
        <end position="285"/>
    </location>
    <ligand>
        <name>S-adenosyl-L-methionine</name>
        <dbReference type="ChEBI" id="CHEBI:59789"/>
    </ligand>
</feature>
<name>TRM10_CANAL</name>
<gene>
    <name evidence="2" type="primary">TRM10</name>
    <name type="ordered locus">CAALFM_C206480WA</name>
    <name type="ORF">CaO19.25</name>
    <name type="ORF">CaO19.7696</name>
</gene>
<comment type="function">
    <text evidence="2">S-adenosyl-L-methionine-dependent guanine N(1)-methyltransferase that catalyzes the formation of N(1)-methylguanine at position 9 (m1G9) in cytoplasmic tRNA.</text>
</comment>
<comment type="catalytic activity">
    <reaction evidence="2">
        <text>guanosine(9) in tRNA + S-adenosyl-L-methionine = N(1)-methylguanosine(9) in tRNA + S-adenosyl-L-homocysteine + H(+)</text>
        <dbReference type="Rhea" id="RHEA:43156"/>
        <dbReference type="Rhea" id="RHEA-COMP:10367"/>
        <dbReference type="Rhea" id="RHEA-COMP:10368"/>
        <dbReference type="ChEBI" id="CHEBI:15378"/>
        <dbReference type="ChEBI" id="CHEBI:57856"/>
        <dbReference type="ChEBI" id="CHEBI:59789"/>
        <dbReference type="ChEBI" id="CHEBI:73542"/>
        <dbReference type="ChEBI" id="CHEBI:74269"/>
        <dbReference type="EC" id="2.1.1.221"/>
    </reaction>
</comment>
<comment type="subunit">
    <text evidence="1">Monomer.</text>
</comment>
<comment type="subcellular location">
    <subcellularLocation>
        <location evidence="2">Cytoplasm</location>
    </subcellularLocation>
    <subcellularLocation>
        <location evidence="2">Nucleus</location>
    </subcellularLocation>
</comment>
<comment type="similarity">
    <text evidence="3">Belongs to the class IV-like SAM-binding methyltransferase superfamily. TRM10 family.</text>
</comment>
<protein>
    <recommendedName>
        <fullName evidence="2">tRNA (guanine(9)-N1)-methyltransferase</fullName>
        <ecNumber evidence="2">2.1.1.221</ecNumber>
    </recommendedName>
    <alternativeName>
        <fullName evidence="2">tRNA methyltransferase 10</fullName>
    </alternativeName>
    <alternativeName>
        <fullName evidence="2">tRNA(m1G9)-methyltransferase</fullName>
        <shortName evidence="2">tRNA(m1G9)MTase</shortName>
    </alternativeName>
</protein>
<dbReference type="EC" id="2.1.1.221" evidence="2"/>
<dbReference type="EMBL" id="CP017624">
    <property type="protein sequence ID" value="AOW27652.1"/>
    <property type="molecule type" value="Genomic_DNA"/>
</dbReference>
<dbReference type="RefSeq" id="XP_711832.1">
    <property type="nucleotide sequence ID" value="XM_706740.1"/>
</dbReference>
<dbReference type="SMR" id="Q59Q39"/>
<dbReference type="FunCoup" id="Q59Q39">
    <property type="interactions" value="801"/>
</dbReference>
<dbReference type="STRING" id="237561.Q59Q39"/>
<dbReference type="EnsemblFungi" id="C2_06480W_A-T">
    <property type="protein sequence ID" value="C2_06480W_A-T-p1"/>
    <property type="gene ID" value="C2_06480W_A"/>
</dbReference>
<dbReference type="GeneID" id="3646568"/>
<dbReference type="KEGG" id="cal:CAALFM_C206480WA"/>
<dbReference type="CGD" id="CAL0000179584">
    <property type="gene designation" value="orf19.7696"/>
</dbReference>
<dbReference type="VEuPathDB" id="FungiDB:C2_06480W_A"/>
<dbReference type="eggNOG" id="KOG2967">
    <property type="taxonomic scope" value="Eukaryota"/>
</dbReference>
<dbReference type="HOGENOM" id="CLU_034384_1_0_1"/>
<dbReference type="InParanoid" id="Q59Q39"/>
<dbReference type="OMA" id="FKKNDGW"/>
<dbReference type="OrthoDB" id="278300at2759"/>
<dbReference type="PRO" id="PR:Q59Q39"/>
<dbReference type="Proteomes" id="UP000000559">
    <property type="component" value="Chromosome 2"/>
</dbReference>
<dbReference type="GO" id="GO:0005737">
    <property type="term" value="C:cytoplasm"/>
    <property type="evidence" value="ECO:0007669"/>
    <property type="project" value="UniProtKB-SubCell"/>
</dbReference>
<dbReference type="GO" id="GO:0005634">
    <property type="term" value="C:nucleus"/>
    <property type="evidence" value="ECO:0000318"/>
    <property type="project" value="GO_Central"/>
</dbReference>
<dbReference type="GO" id="GO:0052905">
    <property type="term" value="F:tRNA (guanosine(9)-N1)-methyltransferase activity"/>
    <property type="evidence" value="ECO:0007669"/>
    <property type="project" value="UniProtKB-EC"/>
</dbReference>
<dbReference type="GO" id="GO:0000049">
    <property type="term" value="F:tRNA binding"/>
    <property type="evidence" value="ECO:0000318"/>
    <property type="project" value="GO_Central"/>
</dbReference>
<dbReference type="GO" id="GO:0002939">
    <property type="term" value="P:tRNA N1-guanine methylation"/>
    <property type="evidence" value="ECO:0000318"/>
    <property type="project" value="GO_Central"/>
</dbReference>
<dbReference type="CDD" id="cd18089">
    <property type="entry name" value="SPOUT_Trm10-like"/>
    <property type="match status" value="1"/>
</dbReference>
<dbReference type="FunFam" id="3.40.1280.30:FF:000004">
    <property type="entry name" value="tRNA (guanine(9)-N1)-methyltransferase"/>
    <property type="match status" value="1"/>
</dbReference>
<dbReference type="Gene3D" id="3.40.1280.30">
    <property type="match status" value="1"/>
</dbReference>
<dbReference type="InterPro" id="IPR028564">
    <property type="entry name" value="MT_TRM10-typ"/>
</dbReference>
<dbReference type="InterPro" id="IPR038459">
    <property type="entry name" value="MT_TRM10-typ_sf"/>
</dbReference>
<dbReference type="InterPro" id="IPR016653">
    <property type="entry name" value="TRM10/TRM10A"/>
</dbReference>
<dbReference type="InterPro" id="IPR007356">
    <property type="entry name" value="tRNA_m1G_MeTrfase_euk"/>
</dbReference>
<dbReference type="InterPro" id="IPR016009">
    <property type="entry name" value="tRNA_MeTrfase_TRMD/TRM10"/>
</dbReference>
<dbReference type="PANTHER" id="PTHR13563">
    <property type="entry name" value="TRNA (GUANINE-9-) METHYLTRANSFERASE"/>
    <property type="match status" value="1"/>
</dbReference>
<dbReference type="PANTHER" id="PTHR13563:SF13">
    <property type="entry name" value="TRNA METHYLTRANSFERASE 10 HOMOLOG A"/>
    <property type="match status" value="1"/>
</dbReference>
<dbReference type="Pfam" id="PF01746">
    <property type="entry name" value="tRNA_m1G_MT"/>
    <property type="match status" value="1"/>
</dbReference>
<dbReference type="PIRSF" id="PIRSF016323">
    <property type="entry name" value="tRNA_m1G_mtfrase_met"/>
    <property type="match status" value="1"/>
</dbReference>
<dbReference type="PROSITE" id="PS51675">
    <property type="entry name" value="SAM_MT_TRM10"/>
    <property type="match status" value="1"/>
</dbReference>
<keyword id="KW-0963">Cytoplasm</keyword>
<keyword id="KW-0489">Methyltransferase</keyword>
<keyword id="KW-0539">Nucleus</keyword>
<keyword id="KW-1185">Reference proteome</keyword>
<keyword id="KW-0949">S-adenosyl-L-methionine</keyword>
<keyword id="KW-0808">Transferase</keyword>
<keyword id="KW-0819">tRNA processing</keyword>
<reference key="1">
    <citation type="journal article" date="2004" name="Proc. Natl. Acad. Sci. U.S.A.">
        <title>The diploid genome sequence of Candida albicans.</title>
        <authorList>
            <person name="Jones T."/>
            <person name="Federspiel N.A."/>
            <person name="Chibana H."/>
            <person name="Dungan J."/>
            <person name="Kalman S."/>
            <person name="Magee B.B."/>
            <person name="Newport G."/>
            <person name="Thorstenson Y.R."/>
            <person name="Agabian N."/>
            <person name="Magee P.T."/>
            <person name="Davis R.W."/>
            <person name="Scherer S."/>
        </authorList>
    </citation>
    <scope>NUCLEOTIDE SEQUENCE [LARGE SCALE GENOMIC DNA]</scope>
    <source>
        <strain>SC5314 / ATCC MYA-2876</strain>
    </source>
</reference>
<reference key="2">
    <citation type="journal article" date="2007" name="Genome Biol.">
        <title>Assembly of the Candida albicans genome into sixteen supercontigs aligned on the eight chromosomes.</title>
        <authorList>
            <person name="van het Hoog M."/>
            <person name="Rast T.J."/>
            <person name="Martchenko M."/>
            <person name="Grindle S."/>
            <person name="Dignard D."/>
            <person name="Hogues H."/>
            <person name="Cuomo C."/>
            <person name="Berriman M."/>
            <person name="Scherer S."/>
            <person name="Magee B.B."/>
            <person name="Whiteway M."/>
            <person name="Chibana H."/>
            <person name="Nantel A."/>
            <person name="Magee P.T."/>
        </authorList>
    </citation>
    <scope>GENOME REANNOTATION</scope>
    <source>
        <strain>SC5314 / ATCC MYA-2876</strain>
    </source>
</reference>
<reference key="3">
    <citation type="journal article" date="2013" name="Genome Biol.">
        <title>Assembly of a phased diploid Candida albicans genome facilitates allele-specific measurements and provides a simple model for repeat and indel structure.</title>
        <authorList>
            <person name="Muzzey D."/>
            <person name="Schwartz K."/>
            <person name="Weissman J.S."/>
            <person name="Sherlock G."/>
        </authorList>
    </citation>
    <scope>NUCLEOTIDE SEQUENCE [LARGE SCALE GENOMIC DNA]</scope>
    <scope>GENOME REANNOTATION</scope>
    <source>
        <strain>SC5314 / ATCC MYA-2876</strain>
    </source>
</reference>
<evidence type="ECO:0000250" key="1">
    <source>
        <dbReference type="UniProtKB" id="O14214"/>
    </source>
</evidence>
<evidence type="ECO:0000250" key="2">
    <source>
        <dbReference type="UniProtKB" id="Q12400"/>
    </source>
</evidence>
<evidence type="ECO:0000255" key="3">
    <source>
        <dbReference type="PROSITE-ProRule" id="PRU01012"/>
    </source>
</evidence>
<evidence type="ECO:0000256" key="4">
    <source>
        <dbReference type="SAM" id="MobiDB-lite"/>
    </source>
</evidence>
<sequence>MTEQTSEATVVNNSPAPTIPKIKREKPTPEEIEERRKLKQLEVVPEGFSRKQWKRELKKQRWQDTKQEYLEVQREKKRLARQRKRERLKDLDENDELRKAQPIPSRQISTNNVSVIIDCDFDELMHEKEIVSLSNQIKACYSAMRHCTYKLPIQITSFNKRLKQRFEAQLHDYHLWQGNISFTDRSLTEYVTGAPNSESKDNDGNSNSNTTNSTDTINTENLVYLTADTDEEITKLEPNHTYIIGGIVDKNRHKQLCYNKAKELGIKVARLPIGKYIEMNGRHVLVTSHVYELLCKWFENDGDWETAFNKVLPPRKIKSKSPS</sequence>
<organism>
    <name type="scientific">Candida albicans (strain SC5314 / ATCC MYA-2876)</name>
    <name type="common">Yeast</name>
    <dbReference type="NCBI Taxonomy" id="237561"/>
    <lineage>
        <taxon>Eukaryota</taxon>
        <taxon>Fungi</taxon>
        <taxon>Dikarya</taxon>
        <taxon>Ascomycota</taxon>
        <taxon>Saccharomycotina</taxon>
        <taxon>Pichiomycetes</taxon>
        <taxon>Debaryomycetaceae</taxon>
        <taxon>Candida/Lodderomyces clade</taxon>
        <taxon>Candida</taxon>
    </lineage>
</organism>
<proteinExistence type="inferred from homology"/>
<accession>Q59Q39</accession>
<accession>A0A1D8PHS2</accession>